<accession>P10306</accession>
<organism>
    <name type="scientific">Enterobacteria phage T3</name>
    <name type="common">Bacteriophage T3</name>
    <dbReference type="NCBI Taxonomy" id="10759"/>
    <lineage>
        <taxon>Viruses</taxon>
        <taxon>Duplodnaviria</taxon>
        <taxon>Heunggongvirae</taxon>
        <taxon>Uroviricota</taxon>
        <taxon>Caudoviricetes</taxon>
        <taxon>Autographiviridae</taxon>
        <taxon>Studiervirinae</taxon>
        <taxon>Teetrevirus</taxon>
        <taxon>Teetrevirus T3</taxon>
    </lineage>
</organism>
<sequence>MLRLLIALLRHRVTWRFLLVLTATLGYAGLNDHLGQLEVAFCSILSCGD</sequence>
<gene>
    <name type="primary">19.5</name>
</gene>
<reference key="1">
    <citation type="journal article" date="1986" name="Virology">
        <title>Cloning and sequencing of the genetic right end of bacteriophage T3 DNA.</title>
        <authorList>
            <person name="Yamada M."/>
            <person name="Fujisawa H."/>
            <person name="Kato H."/>
            <person name="Hamada K."/>
            <person name="Minagawa T."/>
        </authorList>
    </citation>
    <scope>NUCLEOTIDE SEQUENCE [GENOMIC DNA]</scope>
</reference>
<reference key="2">
    <citation type="journal article" date="1986" name="Virology">
        <authorList>
            <person name="Yamada M."/>
            <person name="Fujisawa H."/>
            <person name="Kato H."/>
            <person name="Hamada K."/>
            <person name="Minagawa T."/>
        </authorList>
    </citation>
    <scope>ERRATUM OF PUBMED:3010556</scope>
</reference>
<protein>
    <recommendedName>
        <fullName>Uncharacterized gene 19.5 protein</fullName>
    </recommendedName>
</protein>
<feature type="chain" id="PRO_0000106546" description="Uncharacterized gene 19.5 protein">
    <location>
        <begin position="1"/>
        <end position="49"/>
    </location>
</feature>
<proteinExistence type="predicted"/>
<dbReference type="EMBL" id="M14784">
    <property type="protein sequence ID" value="AAA92531.1"/>
    <property type="molecule type" value="Genomic_DNA"/>
</dbReference>
<dbReference type="PIR" id="I23476">
    <property type="entry name" value="Q9BPT3"/>
</dbReference>
<dbReference type="RefSeq" id="NP_523350.1">
    <property type="nucleotide sequence ID" value="NC_003298.1"/>
</dbReference>
<dbReference type="SMR" id="P10306"/>
<dbReference type="KEGG" id="vg:927459"/>
<dbReference type="OrthoDB" id="26400at10239"/>
<dbReference type="NCBIfam" id="NF040465">
    <property type="entry name" value="T7_gp19.5"/>
    <property type="match status" value="1"/>
</dbReference>
<organismHost>
    <name type="scientific">Escherichia coli</name>
    <dbReference type="NCBI Taxonomy" id="562"/>
</organismHost>
<name>Y195_BPT3</name>